<dbReference type="EC" id="2.7.1.25" evidence="1"/>
<dbReference type="EMBL" id="CP000359">
    <property type="protein sequence ID" value="ABF45703.1"/>
    <property type="molecule type" value="Genomic_DNA"/>
</dbReference>
<dbReference type="RefSeq" id="WP_011530538.1">
    <property type="nucleotide sequence ID" value="NC_008025.1"/>
</dbReference>
<dbReference type="SMR" id="Q1IYI1"/>
<dbReference type="STRING" id="319795.Dgeo_1408"/>
<dbReference type="KEGG" id="dge:Dgeo_1408"/>
<dbReference type="eggNOG" id="COG0529">
    <property type="taxonomic scope" value="Bacteria"/>
</dbReference>
<dbReference type="HOGENOM" id="CLU_046932_2_1_0"/>
<dbReference type="UniPathway" id="UPA00140">
    <property type="reaction ID" value="UER00205"/>
</dbReference>
<dbReference type="Proteomes" id="UP000002431">
    <property type="component" value="Chromosome"/>
</dbReference>
<dbReference type="GO" id="GO:0005737">
    <property type="term" value="C:cytoplasm"/>
    <property type="evidence" value="ECO:0007669"/>
    <property type="project" value="TreeGrafter"/>
</dbReference>
<dbReference type="GO" id="GO:0004020">
    <property type="term" value="F:adenylylsulfate kinase activity"/>
    <property type="evidence" value="ECO:0007669"/>
    <property type="project" value="UniProtKB-UniRule"/>
</dbReference>
<dbReference type="GO" id="GO:0005524">
    <property type="term" value="F:ATP binding"/>
    <property type="evidence" value="ECO:0007669"/>
    <property type="project" value="UniProtKB-UniRule"/>
</dbReference>
<dbReference type="GO" id="GO:0004781">
    <property type="term" value="F:sulfate adenylyltransferase (ATP) activity"/>
    <property type="evidence" value="ECO:0007669"/>
    <property type="project" value="TreeGrafter"/>
</dbReference>
<dbReference type="GO" id="GO:0070814">
    <property type="term" value="P:hydrogen sulfide biosynthetic process"/>
    <property type="evidence" value="ECO:0007669"/>
    <property type="project" value="UniProtKB-UniRule"/>
</dbReference>
<dbReference type="GO" id="GO:0010134">
    <property type="term" value="P:sulfate assimilation via adenylyl sulfate reduction"/>
    <property type="evidence" value="ECO:0007669"/>
    <property type="project" value="TreeGrafter"/>
</dbReference>
<dbReference type="GO" id="GO:0019379">
    <property type="term" value="P:sulfate assimilation, phosphoadenylyl sulfate reduction by phosphoadenylyl-sulfate reductase (thioredoxin)"/>
    <property type="evidence" value="ECO:0007669"/>
    <property type="project" value="TreeGrafter"/>
</dbReference>
<dbReference type="CDD" id="cd02027">
    <property type="entry name" value="APSK"/>
    <property type="match status" value="1"/>
</dbReference>
<dbReference type="Gene3D" id="3.40.50.300">
    <property type="entry name" value="P-loop containing nucleotide triphosphate hydrolases"/>
    <property type="match status" value="1"/>
</dbReference>
<dbReference type="HAMAP" id="MF_00065">
    <property type="entry name" value="Adenylyl_sulf_kinase"/>
    <property type="match status" value="1"/>
</dbReference>
<dbReference type="InterPro" id="IPR002891">
    <property type="entry name" value="APS_kinase"/>
</dbReference>
<dbReference type="InterPro" id="IPR027417">
    <property type="entry name" value="P-loop_NTPase"/>
</dbReference>
<dbReference type="InterPro" id="IPR050512">
    <property type="entry name" value="Sulf_AdTrans/APS_kinase"/>
</dbReference>
<dbReference type="NCBIfam" id="TIGR00455">
    <property type="entry name" value="apsK"/>
    <property type="match status" value="1"/>
</dbReference>
<dbReference type="NCBIfam" id="NF002059">
    <property type="entry name" value="PRK00889.1"/>
    <property type="match status" value="1"/>
</dbReference>
<dbReference type="NCBIfam" id="NF003013">
    <property type="entry name" value="PRK03846.1"/>
    <property type="match status" value="1"/>
</dbReference>
<dbReference type="PANTHER" id="PTHR42700">
    <property type="entry name" value="SULFATE ADENYLYLTRANSFERASE"/>
    <property type="match status" value="1"/>
</dbReference>
<dbReference type="PANTHER" id="PTHR42700:SF1">
    <property type="entry name" value="SULFATE ADENYLYLTRANSFERASE"/>
    <property type="match status" value="1"/>
</dbReference>
<dbReference type="Pfam" id="PF01583">
    <property type="entry name" value="APS_kinase"/>
    <property type="match status" value="1"/>
</dbReference>
<dbReference type="SUPFAM" id="SSF52540">
    <property type="entry name" value="P-loop containing nucleoside triphosphate hydrolases"/>
    <property type="match status" value="1"/>
</dbReference>
<keyword id="KW-0067">ATP-binding</keyword>
<keyword id="KW-0418">Kinase</keyword>
<keyword id="KW-0547">Nucleotide-binding</keyword>
<keyword id="KW-0597">Phosphoprotein</keyword>
<keyword id="KW-0808">Transferase</keyword>
<feature type="chain" id="PRO_1000009009" description="Adenylyl-sulfate kinase">
    <location>
        <begin position="1"/>
        <end position="181"/>
    </location>
</feature>
<feature type="active site" description="Phosphoserine intermediate" evidence="1">
    <location>
        <position position="94"/>
    </location>
</feature>
<feature type="binding site" evidence="1">
    <location>
        <begin position="20"/>
        <end position="27"/>
    </location>
    <ligand>
        <name>ATP</name>
        <dbReference type="ChEBI" id="CHEBI:30616"/>
    </ligand>
</feature>
<protein>
    <recommendedName>
        <fullName evidence="1">Adenylyl-sulfate kinase</fullName>
        <ecNumber evidence="1">2.7.1.25</ecNumber>
    </recommendedName>
    <alternativeName>
        <fullName evidence="1">APS kinase</fullName>
    </alternativeName>
    <alternativeName>
        <fullName evidence="1">ATP adenosine-5'-phosphosulfate 3'-phosphotransferase</fullName>
    </alternativeName>
    <alternativeName>
        <fullName evidence="1">Adenosine-5'-phosphosulfate kinase</fullName>
    </alternativeName>
</protein>
<name>CYSC_DEIGD</name>
<comment type="function">
    <text evidence="1">Catalyzes the synthesis of activated sulfate.</text>
</comment>
<comment type="catalytic activity">
    <reaction evidence="1">
        <text>adenosine 5'-phosphosulfate + ATP = 3'-phosphoadenylyl sulfate + ADP + H(+)</text>
        <dbReference type="Rhea" id="RHEA:24152"/>
        <dbReference type="ChEBI" id="CHEBI:15378"/>
        <dbReference type="ChEBI" id="CHEBI:30616"/>
        <dbReference type="ChEBI" id="CHEBI:58243"/>
        <dbReference type="ChEBI" id="CHEBI:58339"/>
        <dbReference type="ChEBI" id="CHEBI:456216"/>
        <dbReference type="EC" id="2.7.1.25"/>
    </reaction>
</comment>
<comment type="pathway">
    <text evidence="1">Sulfur metabolism; hydrogen sulfide biosynthesis; sulfite from sulfate: step 2/3.</text>
</comment>
<comment type="similarity">
    <text evidence="1">Belongs to the APS kinase family.</text>
</comment>
<evidence type="ECO:0000255" key="1">
    <source>
        <dbReference type="HAMAP-Rule" id="MF_00065"/>
    </source>
</evidence>
<gene>
    <name evidence="1" type="primary">cysC</name>
    <name type="ordered locus">Dgeo_1408</name>
</gene>
<accession>Q1IYI1</accession>
<reference key="1">
    <citation type="submission" date="2006-04" db="EMBL/GenBank/DDBJ databases">
        <title>Complete sequence of chromosome of Deinococcus geothermalis DSM 11300.</title>
        <authorList>
            <person name="Copeland A."/>
            <person name="Lucas S."/>
            <person name="Lapidus A."/>
            <person name="Barry K."/>
            <person name="Detter J.C."/>
            <person name="Glavina del Rio T."/>
            <person name="Hammon N."/>
            <person name="Israni S."/>
            <person name="Dalin E."/>
            <person name="Tice H."/>
            <person name="Pitluck S."/>
            <person name="Brettin T."/>
            <person name="Bruce D."/>
            <person name="Han C."/>
            <person name="Tapia R."/>
            <person name="Saunders E."/>
            <person name="Gilna P."/>
            <person name="Schmutz J."/>
            <person name="Larimer F."/>
            <person name="Land M."/>
            <person name="Hauser L."/>
            <person name="Kyrpides N."/>
            <person name="Kim E."/>
            <person name="Daly M.J."/>
            <person name="Fredrickson J.K."/>
            <person name="Makarova K.S."/>
            <person name="Gaidamakova E.K."/>
            <person name="Zhai M."/>
            <person name="Richardson P."/>
        </authorList>
    </citation>
    <scope>NUCLEOTIDE SEQUENCE [LARGE SCALE GENOMIC DNA]</scope>
    <source>
        <strain>DSM 11300 / CIP 105573 / AG-3a</strain>
    </source>
</reference>
<sequence length="181" mass="19382">MTATLNQPQVGTGRVVWFTGLSGAGKSTLASALHAELTARGVAVELLDGDAVRENLSKGLGFSKQDRDTNVRRIGFVAGLLAKHGVTVLVSAISPYAETRREVLSTLPNPTEVFVDAPLEVVTERDVKGLYLRALAGEIPHFTGVSDPYEAPQNPDLHLRTDRISVEEGVRQLLAHLGYGA</sequence>
<organism>
    <name type="scientific">Deinococcus geothermalis (strain DSM 11300 / CIP 105573 / AG-3a)</name>
    <dbReference type="NCBI Taxonomy" id="319795"/>
    <lineage>
        <taxon>Bacteria</taxon>
        <taxon>Thermotogati</taxon>
        <taxon>Deinococcota</taxon>
        <taxon>Deinococci</taxon>
        <taxon>Deinococcales</taxon>
        <taxon>Deinococcaceae</taxon>
        <taxon>Deinococcus</taxon>
    </lineage>
</organism>
<proteinExistence type="inferred from homology"/>